<keyword id="KW-0106">Calcium</keyword>
<keyword id="KW-0119">Carbohydrate metabolism</keyword>
<keyword id="KW-0868">Chloride</keyword>
<keyword id="KW-1015">Disulfide bond</keyword>
<keyword id="KW-0326">Glycosidase</keyword>
<keyword id="KW-0378">Hydrolase</keyword>
<keyword id="KW-0479">Metal-binding</keyword>
<keyword id="KW-0873">Pyrrolidone carboxylic acid</keyword>
<keyword id="KW-0732">Signal</keyword>
<dbReference type="EC" id="3.2.1.1" evidence="2"/>
<dbReference type="EMBL" id="D17729">
    <property type="protein sequence ID" value="BAA04583.1"/>
    <property type="molecule type" value="Genomic_DNA"/>
</dbReference>
<dbReference type="EMBL" id="D17730">
    <property type="protein sequence ID" value="BAA04584.1"/>
    <property type="molecule type" value="Genomic_DNA"/>
</dbReference>
<dbReference type="PIR" id="S58939">
    <property type="entry name" value="S58939"/>
</dbReference>
<dbReference type="PIR" id="S58940">
    <property type="entry name" value="S58940"/>
</dbReference>
<dbReference type="SMR" id="P54215"/>
<dbReference type="CAZy" id="GH13">
    <property type="family name" value="Glycoside Hydrolase Family 13"/>
</dbReference>
<dbReference type="Proteomes" id="UP000515162">
    <property type="component" value="Unplaced"/>
</dbReference>
<dbReference type="GO" id="GO:0004556">
    <property type="term" value="F:alpha-amylase activity"/>
    <property type="evidence" value="ECO:0007669"/>
    <property type="project" value="UniProtKB-EC"/>
</dbReference>
<dbReference type="GO" id="GO:0046872">
    <property type="term" value="F:metal ion binding"/>
    <property type="evidence" value="ECO:0007669"/>
    <property type="project" value="UniProtKB-KW"/>
</dbReference>
<dbReference type="GO" id="GO:0005975">
    <property type="term" value="P:carbohydrate metabolic process"/>
    <property type="evidence" value="ECO:0007669"/>
    <property type="project" value="InterPro"/>
</dbReference>
<dbReference type="CDD" id="cd11317">
    <property type="entry name" value="AmyAc_bac_euk_AmyA"/>
    <property type="match status" value="1"/>
</dbReference>
<dbReference type="FunFam" id="2.60.40.1180:FF:000020">
    <property type="entry name" value="Pancreatic alpha-amylase"/>
    <property type="match status" value="1"/>
</dbReference>
<dbReference type="FunFam" id="3.20.20.80:FF:000056">
    <property type="entry name" value="Pancreatic alpha-amylase"/>
    <property type="match status" value="1"/>
</dbReference>
<dbReference type="Gene3D" id="3.20.20.80">
    <property type="entry name" value="Glycosidases"/>
    <property type="match status" value="1"/>
</dbReference>
<dbReference type="Gene3D" id="2.60.40.1180">
    <property type="entry name" value="Golgi alpha-mannosidase II"/>
    <property type="match status" value="1"/>
</dbReference>
<dbReference type="InterPro" id="IPR006048">
    <property type="entry name" value="A-amylase/branching_C"/>
</dbReference>
<dbReference type="InterPro" id="IPR031319">
    <property type="entry name" value="A-amylase_C"/>
</dbReference>
<dbReference type="InterPro" id="IPR006046">
    <property type="entry name" value="Alpha_amylase"/>
</dbReference>
<dbReference type="InterPro" id="IPR006047">
    <property type="entry name" value="Glyco_hydro_13_cat_dom"/>
</dbReference>
<dbReference type="InterPro" id="IPR013780">
    <property type="entry name" value="Glyco_hydro_b"/>
</dbReference>
<dbReference type="InterPro" id="IPR017853">
    <property type="entry name" value="Glycoside_hydrolase_SF"/>
</dbReference>
<dbReference type="PANTHER" id="PTHR43447">
    <property type="entry name" value="ALPHA-AMYLASE"/>
    <property type="match status" value="1"/>
</dbReference>
<dbReference type="Pfam" id="PF00128">
    <property type="entry name" value="Alpha-amylase"/>
    <property type="match status" value="1"/>
</dbReference>
<dbReference type="Pfam" id="PF02806">
    <property type="entry name" value="Alpha-amylase_C"/>
    <property type="match status" value="1"/>
</dbReference>
<dbReference type="PRINTS" id="PR00110">
    <property type="entry name" value="ALPHAAMYLASE"/>
</dbReference>
<dbReference type="SMART" id="SM00642">
    <property type="entry name" value="Aamy"/>
    <property type="match status" value="1"/>
</dbReference>
<dbReference type="SMART" id="SM00632">
    <property type="entry name" value="Aamy_C"/>
    <property type="match status" value="1"/>
</dbReference>
<dbReference type="SUPFAM" id="SSF51445">
    <property type="entry name" value="(Trans)glycosidases"/>
    <property type="match status" value="1"/>
</dbReference>
<dbReference type="SUPFAM" id="SSF51011">
    <property type="entry name" value="Glycosyl hydrolase domain"/>
    <property type="match status" value="1"/>
</dbReference>
<gene>
    <name type="primary">Amy-d</name>
</gene>
<gene>
    <name type="primary">Amy-p</name>
</gene>
<sequence>MFLAKSLVCLALLAVANAQFDTNYASGRSGMVHLFEWKWDDIAAECENFLGPNGFAGVQVSPVNENAVKDSRPWWERYQPISYKLETRSGNEQQFASMVKRCNAVGVRIYVDVIFNHMAADGGTYGTGGSTASPSSKSYPGVPYSSLDFNPTCAINNYNDANQVRNCELVGLRDLNQGNSYVQDKVVEFLDHLIDLGVAGFRVDAAKHMWPADLAVIYGRLKNLNTDHGFASGSKAYIVQEVIDMGGEAISKSEYTGLGAITEFRHSDSIGKVFRGKDQLQYLTNWGTAWGFAASDRSLVFVDNHDNQRGHGAGGADVLTYKVPKQYKMASAFMLAHPFGTPRVMSSFSFSDTDQGPPTTDGHNIASPVFNSDNSCSGGWVCEHRWRQIYNMVAFRNTVGSDAIQNWWDNGSNQISFSRGSRGFVAFNNDNYDLNSSLQTGLPAGTYCDVISGSKSGSSCTGKTVSVGSDGRASIYIGSSEDDGVLAIHVNAKL</sequence>
<evidence type="ECO:0000250" key="1"/>
<evidence type="ECO:0000250" key="2">
    <source>
        <dbReference type="UniProtKB" id="P04746"/>
    </source>
</evidence>
<evidence type="ECO:0000305" key="3"/>
<name>AMYA_DROMA</name>
<proteinExistence type="inferred from homology"/>
<comment type="catalytic activity">
    <reaction evidence="2">
        <text>Endohydrolysis of (1-&gt;4)-alpha-D-glucosidic linkages in polysaccharides containing three or more (1-&gt;4)-alpha-linked D-glucose units.</text>
        <dbReference type="EC" id="3.2.1.1"/>
    </reaction>
</comment>
<comment type="cofactor">
    <cofactor evidence="2">
        <name>Ca(2+)</name>
        <dbReference type="ChEBI" id="CHEBI:29108"/>
    </cofactor>
    <text evidence="2">Binds 1 Ca(2+) ion per subunit.</text>
</comment>
<comment type="cofactor">
    <cofactor evidence="2">
        <name>chloride</name>
        <dbReference type="ChEBI" id="CHEBI:17996"/>
    </cofactor>
    <text evidence="2">Binds 1 Cl(-) ion per subunit.</text>
</comment>
<comment type="subunit">
    <text evidence="1">Monomer.</text>
</comment>
<comment type="similarity">
    <text evidence="3">Belongs to the glycosyl hydrolase 13 family.</text>
</comment>
<protein>
    <recommendedName>
        <fullName>Alpha-amylase A</fullName>
        <ecNumber evidence="2">3.2.1.1</ecNumber>
    </recommendedName>
    <alternativeName>
        <fullName>1,4-alpha-D-glucan glucanohydrolase</fullName>
    </alternativeName>
</protein>
<accession>P54215</accession>
<feature type="signal peptide" evidence="1">
    <location>
        <begin position="1"/>
        <end position="18"/>
    </location>
</feature>
<feature type="chain" id="PRO_0000001363" description="Alpha-amylase A">
    <location>
        <begin position="19"/>
        <end position="494"/>
    </location>
</feature>
<feature type="active site" description="Nucleophile" evidence="2">
    <location>
        <position position="204"/>
    </location>
</feature>
<feature type="active site" description="Proton donor" evidence="2">
    <location>
        <position position="241"/>
    </location>
</feature>
<feature type="binding site" evidence="2">
    <location>
        <position position="116"/>
    </location>
    <ligand>
        <name>Ca(2+)</name>
        <dbReference type="ChEBI" id="CHEBI:29108"/>
    </ligand>
</feature>
<feature type="binding site" evidence="2">
    <location>
        <position position="165"/>
    </location>
    <ligand>
        <name>Ca(2+)</name>
        <dbReference type="ChEBI" id="CHEBI:29108"/>
    </ligand>
</feature>
<feature type="binding site" evidence="2">
    <location>
        <position position="174"/>
    </location>
    <ligand>
        <name>Ca(2+)</name>
        <dbReference type="ChEBI" id="CHEBI:29108"/>
    </ligand>
</feature>
<feature type="binding site" evidence="2">
    <location>
        <position position="202"/>
    </location>
    <ligand>
        <name>chloride</name>
        <dbReference type="ChEBI" id="CHEBI:17996"/>
    </ligand>
</feature>
<feature type="binding site" evidence="2">
    <location>
        <position position="208"/>
    </location>
    <ligand>
        <name>Ca(2+)</name>
        <dbReference type="ChEBI" id="CHEBI:29108"/>
    </ligand>
</feature>
<feature type="binding site" evidence="2">
    <location>
        <position position="304"/>
    </location>
    <ligand>
        <name>chloride</name>
        <dbReference type="ChEBI" id="CHEBI:17996"/>
    </ligand>
</feature>
<feature type="binding site" evidence="2">
    <location>
        <position position="343"/>
    </location>
    <ligand>
        <name>chloride</name>
        <dbReference type="ChEBI" id="CHEBI:17996"/>
    </ligand>
</feature>
<feature type="site" description="Transition state stabilizer" evidence="2">
    <location>
        <position position="306"/>
    </location>
</feature>
<feature type="modified residue" description="Pyrrolidone carboxylic acid" evidence="2">
    <location>
        <position position="19"/>
    </location>
</feature>
<feature type="disulfide bond" evidence="2">
    <location>
        <begin position="46"/>
        <end position="102"/>
    </location>
</feature>
<feature type="disulfide bond" evidence="2">
    <location>
        <begin position="153"/>
        <end position="167"/>
    </location>
</feature>
<feature type="disulfide bond" evidence="2">
    <location>
        <begin position="376"/>
        <end position="382"/>
    </location>
</feature>
<feature type="disulfide bond" evidence="2">
    <location>
        <begin position="448"/>
        <end position="460"/>
    </location>
</feature>
<feature type="sequence variant" description="In Amy-P.">
    <original>L</original>
    <variation>I</variation>
    <location>
        <position position="7"/>
    </location>
</feature>
<feature type="sequence variant" description="In Amy-P.">
    <original>T</original>
    <variation>A</variation>
    <location>
        <position position="398"/>
    </location>
</feature>
<reference key="1">
    <citation type="journal article" date="1995" name="Genetics">
        <title>Molecular evolution of the duplicated Amy locus in the Drosophila melanogaster species subgroup: concerted evolution only in the coding region and an excess of nonsynonymous substitutions in speciation.</title>
        <authorList>
            <person name="Shibata H."/>
            <person name="Yamazaki T."/>
        </authorList>
    </citation>
    <scope>NUCLEOTIDE SEQUENCE [GENOMIC DNA]</scope>
</reference>
<organism>
    <name type="scientific">Drosophila mauritiana</name>
    <name type="common">Fruit fly</name>
    <dbReference type="NCBI Taxonomy" id="7226"/>
    <lineage>
        <taxon>Eukaryota</taxon>
        <taxon>Metazoa</taxon>
        <taxon>Ecdysozoa</taxon>
        <taxon>Arthropoda</taxon>
        <taxon>Hexapoda</taxon>
        <taxon>Insecta</taxon>
        <taxon>Pterygota</taxon>
        <taxon>Neoptera</taxon>
        <taxon>Endopterygota</taxon>
        <taxon>Diptera</taxon>
        <taxon>Brachycera</taxon>
        <taxon>Muscomorpha</taxon>
        <taxon>Ephydroidea</taxon>
        <taxon>Drosophilidae</taxon>
        <taxon>Drosophila</taxon>
        <taxon>Sophophora</taxon>
    </lineage>
</organism>